<feature type="chain" id="PRO_1000125136" description="Fluoride-specific ion channel FluC">
    <location>
        <begin position="1"/>
        <end position="130"/>
    </location>
</feature>
<feature type="transmembrane region" description="Helical" evidence="1">
    <location>
        <begin position="3"/>
        <end position="23"/>
    </location>
</feature>
<feature type="transmembrane region" description="Helical" evidence="1">
    <location>
        <begin position="39"/>
        <end position="59"/>
    </location>
</feature>
<feature type="transmembrane region" description="Helical" evidence="1">
    <location>
        <begin position="67"/>
        <end position="87"/>
    </location>
</feature>
<feature type="transmembrane region" description="Helical" evidence="1">
    <location>
        <begin position="102"/>
        <end position="122"/>
    </location>
</feature>
<feature type="binding site" evidence="1">
    <location>
        <position position="77"/>
    </location>
    <ligand>
        <name>Na(+)</name>
        <dbReference type="ChEBI" id="CHEBI:29101"/>
        <note>structural</note>
    </ligand>
</feature>
<feature type="binding site" evidence="1">
    <location>
        <position position="80"/>
    </location>
    <ligand>
        <name>Na(+)</name>
        <dbReference type="ChEBI" id="CHEBI:29101"/>
        <note>structural</note>
    </ligand>
</feature>
<keyword id="KW-0997">Cell inner membrane</keyword>
<keyword id="KW-1003">Cell membrane</keyword>
<keyword id="KW-0407">Ion channel</keyword>
<keyword id="KW-0406">Ion transport</keyword>
<keyword id="KW-0472">Membrane</keyword>
<keyword id="KW-0479">Metal-binding</keyword>
<keyword id="KW-0915">Sodium</keyword>
<keyword id="KW-0812">Transmembrane</keyword>
<keyword id="KW-1133">Transmembrane helix</keyword>
<keyword id="KW-0813">Transport</keyword>
<accession>B2UUY7</accession>
<reference key="1">
    <citation type="submission" date="2008-05" db="EMBL/GenBank/DDBJ databases">
        <title>Genome sequence of Helicobacter pylori from the remote Amazon: traces of Asian ancestry of the first Americans.</title>
        <authorList>
            <person name="Kersulyte D."/>
            <person name="Kalia A."/>
            <person name="Gilman R.H."/>
            <person name="Berg D.E."/>
        </authorList>
    </citation>
    <scope>NUCLEOTIDE SEQUENCE [LARGE SCALE GENOMIC DNA]</scope>
    <source>
        <strain>Shi470</strain>
    </source>
</reference>
<name>FLUC_HELPS</name>
<dbReference type="EMBL" id="CP001072">
    <property type="protein sequence ID" value="ACD48669.1"/>
    <property type="molecule type" value="Genomic_DNA"/>
</dbReference>
<dbReference type="RefSeq" id="WP_001009237.1">
    <property type="nucleotide sequence ID" value="NC_010698.2"/>
</dbReference>
<dbReference type="SMR" id="B2UUY7"/>
<dbReference type="KEGG" id="hps:HPSH_06335"/>
<dbReference type="HOGENOM" id="CLU_114342_2_3_7"/>
<dbReference type="GO" id="GO:0005886">
    <property type="term" value="C:plasma membrane"/>
    <property type="evidence" value="ECO:0007669"/>
    <property type="project" value="UniProtKB-SubCell"/>
</dbReference>
<dbReference type="GO" id="GO:0062054">
    <property type="term" value="F:fluoride channel activity"/>
    <property type="evidence" value="ECO:0007669"/>
    <property type="project" value="UniProtKB-UniRule"/>
</dbReference>
<dbReference type="GO" id="GO:0046872">
    <property type="term" value="F:metal ion binding"/>
    <property type="evidence" value="ECO:0007669"/>
    <property type="project" value="UniProtKB-KW"/>
</dbReference>
<dbReference type="GO" id="GO:0140114">
    <property type="term" value="P:cellular detoxification of fluoride"/>
    <property type="evidence" value="ECO:0007669"/>
    <property type="project" value="UniProtKB-UniRule"/>
</dbReference>
<dbReference type="HAMAP" id="MF_00454">
    <property type="entry name" value="FluC"/>
    <property type="match status" value="1"/>
</dbReference>
<dbReference type="InterPro" id="IPR003691">
    <property type="entry name" value="FluC"/>
</dbReference>
<dbReference type="NCBIfam" id="TIGR00494">
    <property type="entry name" value="crcB"/>
    <property type="match status" value="1"/>
</dbReference>
<dbReference type="PANTHER" id="PTHR28259">
    <property type="entry name" value="FLUORIDE EXPORT PROTEIN 1-RELATED"/>
    <property type="match status" value="1"/>
</dbReference>
<dbReference type="PANTHER" id="PTHR28259:SF18">
    <property type="entry name" value="FLUORIDE-SPECIFIC ION CHANNEL FLUC"/>
    <property type="match status" value="1"/>
</dbReference>
<dbReference type="Pfam" id="PF02537">
    <property type="entry name" value="CRCB"/>
    <property type="match status" value="1"/>
</dbReference>
<organism>
    <name type="scientific">Helicobacter pylori (strain Shi470)</name>
    <dbReference type="NCBI Taxonomy" id="512562"/>
    <lineage>
        <taxon>Bacteria</taxon>
        <taxon>Pseudomonadati</taxon>
        <taxon>Campylobacterota</taxon>
        <taxon>Epsilonproteobacteria</taxon>
        <taxon>Campylobacterales</taxon>
        <taxon>Helicobacteraceae</taxon>
        <taxon>Helicobacter</taxon>
    </lineage>
</organism>
<proteinExistence type="inferred from homology"/>
<comment type="function">
    <text evidence="1">Fluoride-specific ion channel. Important for reducing fluoride concentration in the cell, thus reducing its toxicity.</text>
</comment>
<comment type="catalytic activity">
    <reaction evidence="1">
        <text>fluoride(in) = fluoride(out)</text>
        <dbReference type="Rhea" id="RHEA:76159"/>
        <dbReference type="ChEBI" id="CHEBI:17051"/>
    </reaction>
    <physiologicalReaction direction="left-to-right" evidence="1">
        <dbReference type="Rhea" id="RHEA:76160"/>
    </physiologicalReaction>
</comment>
<comment type="activity regulation">
    <text evidence="1">Na(+) is not transported, but it plays an essential structural role and its presence is essential for fluoride channel function.</text>
</comment>
<comment type="subcellular location">
    <subcellularLocation>
        <location evidence="1">Cell inner membrane</location>
        <topology evidence="1">Multi-pass membrane protein</topology>
    </subcellularLocation>
</comment>
<comment type="similarity">
    <text evidence="1">Belongs to the fluoride channel Fluc/FEX (TC 1.A.43) family.</text>
</comment>
<evidence type="ECO:0000255" key="1">
    <source>
        <dbReference type="HAMAP-Rule" id="MF_00454"/>
    </source>
</evidence>
<protein>
    <recommendedName>
        <fullName evidence="1">Fluoride-specific ion channel FluC</fullName>
    </recommendedName>
</protein>
<gene>
    <name evidence="1" type="primary">fluC</name>
    <name evidence="1" type="synonym">crcB</name>
    <name type="ordered locus">HPSH_06335</name>
</gene>
<sequence>MNFIFLWAALGGAIGSSLRYFVGKMMPSKFLMFESFPLGTFSVNVIGCFVIGFMGHLAVKKVFGDDFGIFFVTGVLGGFTTFSSYGLDTLKLLQKSQYIEAVSYALGTNILGLIGVAIGWFLAKNFVGIN</sequence>